<feature type="chain" id="PRO_0000361809" description="Protein pelota homolog">
    <location>
        <begin position="1"/>
        <end position="341"/>
    </location>
</feature>
<dbReference type="EC" id="3.1.-.-" evidence="1"/>
<dbReference type="EMBL" id="CP000254">
    <property type="protein sequence ID" value="ABD40200.1"/>
    <property type="molecule type" value="Genomic_DNA"/>
</dbReference>
<dbReference type="RefSeq" id="WP_011447489.1">
    <property type="nucleotide sequence ID" value="NC_007796.1"/>
</dbReference>
<dbReference type="SMR" id="Q2FQH4"/>
<dbReference type="FunCoup" id="Q2FQH4">
    <property type="interactions" value="100"/>
</dbReference>
<dbReference type="STRING" id="323259.Mhun_0438"/>
<dbReference type="EnsemblBacteria" id="ABD40200">
    <property type="protein sequence ID" value="ABD40200"/>
    <property type="gene ID" value="Mhun_0438"/>
</dbReference>
<dbReference type="GeneID" id="3924665"/>
<dbReference type="KEGG" id="mhu:Mhun_0438"/>
<dbReference type="eggNOG" id="arCOG01741">
    <property type="taxonomic scope" value="Archaea"/>
</dbReference>
<dbReference type="HOGENOM" id="CLU_023334_0_0_2"/>
<dbReference type="InParanoid" id="Q2FQH4"/>
<dbReference type="OrthoDB" id="31300at2157"/>
<dbReference type="Proteomes" id="UP000001941">
    <property type="component" value="Chromosome"/>
</dbReference>
<dbReference type="GO" id="GO:0005737">
    <property type="term" value="C:cytoplasm"/>
    <property type="evidence" value="ECO:0007669"/>
    <property type="project" value="UniProtKB-SubCell"/>
</dbReference>
<dbReference type="GO" id="GO:0004519">
    <property type="term" value="F:endonuclease activity"/>
    <property type="evidence" value="ECO:0007669"/>
    <property type="project" value="UniProtKB-UniRule"/>
</dbReference>
<dbReference type="GO" id="GO:0046872">
    <property type="term" value="F:metal ion binding"/>
    <property type="evidence" value="ECO:0007669"/>
    <property type="project" value="UniProtKB-UniRule"/>
</dbReference>
<dbReference type="GO" id="GO:0070651">
    <property type="term" value="P:nonfunctional rRNA decay"/>
    <property type="evidence" value="ECO:0007669"/>
    <property type="project" value="TreeGrafter"/>
</dbReference>
<dbReference type="GO" id="GO:0070966">
    <property type="term" value="P:nuclear-transcribed mRNA catabolic process, no-go decay"/>
    <property type="evidence" value="ECO:0007669"/>
    <property type="project" value="InterPro"/>
</dbReference>
<dbReference type="GO" id="GO:0070481">
    <property type="term" value="P:nuclear-transcribed mRNA catabolic process, non-stop decay"/>
    <property type="evidence" value="ECO:0007669"/>
    <property type="project" value="InterPro"/>
</dbReference>
<dbReference type="GO" id="GO:0032790">
    <property type="term" value="P:ribosome disassembly"/>
    <property type="evidence" value="ECO:0007669"/>
    <property type="project" value="TreeGrafter"/>
</dbReference>
<dbReference type="GO" id="GO:0071025">
    <property type="term" value="P:RNA surveillance"/>
    <property type="evidence" value="ECO:0007669"/>
    <property type="project" value="InterPro"/>
</dbReference>
<dbReference type="Gene3D" id="3.30.1330.30">
    <property type="match status" value="1"/>
</dbReference>
<dbReference type="Gene3D" id="3.30.420.60">
    <property type="entry name" value="eRF1 domain 2"/>
    <property type="match status" value="1"/>
</dbReference>
<dbReference type="Gene3D" id="2.30.30.870">
    <property type="entry name" value="Pelota, domain A"/>
    <property type="match status" value="1"/>
</dbReference>
<dbReference type="HAMAP" id="MF_01853">
    <property type="entry name" value="PelO"/>
    <property type="match status" value="1"/>
</dbReference>
<dbReference type="InterPro" id="IPR042226">
    <property type="entry name" value="eFR1_2_sf"/>
</dbReference>
<dbReference type="InterPro" id="IPR005140">
    <property type="entry name" value="eRF1_1_Pelota"/>
</dbReference>
<dbReference type="InterPro" id="IPR005142">
    <property type="entry name" value="eRF1_3"/>
</dbReference>
<dbReference type="InterPro" id="IPR038069">
    <property type="entry name" value="Pelota/DOM34_N"/>
</dbReference>
<dbReference type="InterPro" id="IPR023521">
    <property type="entry name" value="Pelota_arc"/>
</dbReference>
<dbReference type="InterPro" id="IPR029064">
    <property type="entry name" value="Ribosomal_eL30-like_sf"/>
</dbReference>
<dbReference type="InterPro" id="IPR004405">
    <property type="entry name" value="Transl-rel_pelota"/>
</dbReference>
<dbReference type="NCBIfam" id="TIGR00111">
    <property type="entry name" value="pelota"/>
    <property type="match status" value="1"/>
</dbReference>
<dbReference type="PANTHER" id="PTHR10853">
    <property type="entry name" value="PELOTA"/>
    <property type="match status" value="1"/>
</dbReference>
<dbReference type="PANTHER" id="PTHR10853:SF0">
    <property type="entry name" value="PROTEIN PELOTA HOMOLOG"/>
    <property type="match status" value="1"/>
</dbReference>
<dbReference type="Pfam" id="PF03463">
    <property type="entry name" value="eRF1_1"/>
    <property type="match status" value="1"/>
</dbReference>
<dbReference type="Pfam" id="PF03465">
    <property type="entry name" value="eRF1_3"/>
    <property type="match status" value="1"/>
</dbReference>
<dbReference type="SMART" id="SM01194">
    <property type="entry name" value="eRF1_1"/>
    <property type="match status" value="1"/>
</dbReference>
<dbReference type="SUPFAM" id="SSF159065">
    <property type="entry name" value="Dom34/Pelota N-terminal domain-like"/>
    <property type="match status" value="1"/>
</dbReference>
<dbReference type="SUPFAM" id="SSF55315">
    <property type="entry name" value="L30e-like"/>
    <property type="match status" value="1"/>
</dbReference>
<dbReference type="SUPFAM" id="SSF53137">
    <property type="entry name" value="Translational machinery components"/>
    <property type="match status" value="1"/>
</dbReference>
<organism>
    <name type="scientific">Methanospirillum hungatei JF-1 (strain ATCC 27890 / DSM 864 / NBRC 100397 / JF-1)</name>
    <dbReference type="NCBI Taxonomy" id="323259"/>
    <lineage>
        <taxon>Archaea</taxon>
        <taxon>Methanobacteriati</taxon>
        <taxon>Methanobacteriota</taxon>
        <taxon>Stenosarchaea group</taxon>
        <taxon>Methanomicrobia</taxon>
        <taxon>Methanomicrobiales</taxon>
        <taxon>Methanospirillaceae</taxon>
        <taxon>Methanospirillum</taxon>
    </lineage>
</organism>
<sequence length="341" mass="37492">MKAEIEELQRSFGEIRLFPENSDDLWHLHNLITPGSLVYATTLRSVEGSQDKIRPEKQEKRPVRLGIRVEDVEFHEYSIRLRVFGTIESGVDIGSHHTLNLEPGYEISVIKSWSGSDLERIDRAIKGSTSEAIHILTVEEGEAELYRVQSYGPKQVWSLAAGSGKTAEVSSREEFSEAVVSQVSQLTGPLVIAGPGFVKEEIIAKFKRKNPSRSAPLVIGDTRAGGRRAVQEVIGQGILEKLNGDLQLAREVTCLDELMRRIGKDEPVAYGIDAVRDATGCGAVQTLMVVDTLLRDPDAADLIRQAEAMRSEVVIFSSRFEPGERLAGLGGIAALLRYSIA</sequence>
<comment type="function">
    <text evidence="1">May function in recognizing stalled ribosomes, interact with stem-loop structures in stalled mRNA molecules, and effect endonucleolytic cleavage of the mRNA. May play a role in the release non-functional ribosomes and degradation of damaged mRNAs. Has endoribonuclease activity.</text>
</comment>
<comment type="cofactor">
    <cofactor evidence="1">
        <name>a divalent metal cation</name>
        <dbReference type="ChEBI" id="CHEBI:60240"/>
    </cofactor>
</comment>
<comment type="subunit">
    <text evidence="1">Monomer.</text>
</comment>
<comment type="subcellular location">
    <subcellularLocation>
        <location evidence="1">Cytoplasm</location>
    </subcellularLocation>
</comment>
<comment type="domain">
    <text evidence="1">The N-terminal domain has the RNA-binding Sm fold. It harbors the endoribonuclease activity.</text>
</comment>
<comment type="similarity">
    <text evidence="1">Belongs to the eukaryotic release factor 1 family. Pelota subfamily.</text>
</comment>
<evidence type="ECO:0000255" key="1">
    <source>
        <dbReference type="HAMAP-Rule" id="MF_01853"/>
    </source>
</evidence>
<gene>
    <name evidence="1" type="primary">pelA</name>
    <name type="ordered locus">Mhun_0438</name>
</gene>
<proteinExistence type="inferred from homology"/>
<keyword id="KW-0963">Cytoplasm</keyword>
<keyword id="KW-0255">Endonuclease</keyword>
<keyword id="KW-0378">Hydrolase</keyword>
<keyword id="KW-0479">Metal-binding</keyword>
<keyword id="KW-0540">Nuclease</keyword>
<keyword id="KW-1185">Reference proteome</keyword>
<name>PELO_METHJ</name>
<reference key="1">
    <citation type="journal article" date="2016" name="Stand. Genomic Sci.">
        <title>Complete genome sequence of Methanospirillum hungatei type strain JF1.</title>
        <authorList>
            <person name="Gunsalus R.P."/>
            <person name="Cook L.E."/>
            <person name="Crable B."/>
            <person name="Rohlin L."/>
            <person name="McDonald E."/>
            <person name="Mouttaki H."/>
            <person name="Sieber J.R."/>
            <person name="Poweleit N."/>
            <person name="Zhou H."/>
            <person name="Lapidus A.L."/>
            <person name="Daligault H.E."/>
            <person name="Land M."/>
            <person name="Gilna P."/>
            <person name="Ivanova N."/>
            <person name="Kyrpides N."/>
            <person name="Culley D.E."/>
            <person name="McInerney M.J."/>
        </authorList>
    </citation>
    <scope>NUCLEOTIDE SEQUENCE [LARGE SCALE GENOMIC DNA]</scope>
    <source>
        <strain>ATCC 27890 / DSM 864 / NBRC 100397 / JF-1</strain>
    </source>
</reference>
<protein>
    <recommendedName>
        <fullName evidence="1">Protein pelota homolog</fullName>
        <ecNumber evidence="1">3.1.-.-</ecNumber>
    </recommendedName>
</protein>
<accession>Q2FQH4</accession>